<gene>
    <name evidence="1" type="primary">cysS</name>
    <name type="ordered locus">BMA10229_A3156</name>
</gene>
<protein>
    <recommendedName>
        <fullName evidence="1">Cysteine--tRNA ligase</fullName>
        <ecNumber evidence="1">6.1.1.16</ecNumber>
    </recommendedName>
    <alternativeName>
        <fullName evidence="1">Cysteinyl-tRNA synthetase</fullName>
        <shortName evidence="1">CysRS</shortName>
    </alternativeName>
</protein>
<keyword id="KW-0030">Aminoacyl-tRNA synthetase</keyword>
<keyword id="KW-0067">ATP-binding</keyword>
<keyword id="KW-0963">Cytoplasm</keyword>
<keyword id="KW-0436">Ligase</keyword>
<keyword id="KW-0479">Metal-binding</keyword>
<keyword id="KW-0547">Nucleotide-binding</keyword>
<keyword id="KW-0648">Protein biosynthesis</keyword>
<keyword id="KW-0862">Zinc</keyword>
<comment type="catalytic activity">
    <reaction evidence="1">
        <text>tRNA(Cys) + L-cysteine + ATP = L-cysteinyl-tRNA(Cys) + AMP + diphosphate</text>
        <dbReference type="Rhea" id="RHEA:17773"/>
        <dbReference type="Rhea" id="RHEA-COMP:9661"/>
        <dbReference type="Rhea" id="RHEA-COMP:9679"/>
        <dbReference type="ChEBI" id="CHEBI:30616"/>
        <dbReference type="ChEBI" id="CHEBI:33019"/>
        <dbReference type="ChEBI" id="CHEBI:35235"/>
        <dbReference type="ChEBI" id="CHEBI:78442"/>
        <dbReference type="ChEBI" id="CHEBI:78517"/>
        <dbReference type="ChEBI" id="CHEBI:456215"/>
        <dbReference type="EC" id="6.1.1.16"/>
    </reaction>
</comment>
<comment type="cofactor">
    <cofactor evidence="1">
        <name>Zn(2+)</name>
        <dbReference type="ChEBI" id="CHEBI:29105"/>
    </cofactor>
    <text evidence="1">Binds 1 zinc ion per subunit.</text>
</comment>
<comment type="subunit">
    <text evidence="1">Monomer.</text>
</comment>
<comment type="subcellular location">
    <subcellularLocation>
        <location evidence="1">Cytoplasm</location>
    </subcellularLocation>
</comment>
<comment type="similarity">
    <text evidence="1">Belongs to the class-I aminoacyl-tRNA synthetase family.</text>
</comment>
<proteinExistence type="inferred from homology"/>
<sequence>MESLRIYNTLARDKQDFVPRQPGEVRMYVCGITVYDYCHIGHARMVVVFDIVQRWLRARGYRVTYVRNITDIDDKIIRRAVENGETIQSLTRRFTDAMNADFDALGVERPDLEPRATEFIPQMLGMIEKLEANGYAYQAKDGDVNYSVRKFANYGRLSGKSLEDLRAGERVAANDAKEDPLDFVLWKRAKPQEPAGASWESKYGAGRPGWHIECSAMGCTLLGAHFDIHGGGQDLQFPHHENEIAQSEGATGQTFVNYWMHNGFVQVDSEKMSKSLGNFFTIREVLEKFDAEVVRFFIVRTHYRSPLNYSDVHLDDARASLTRLYTALKDATPDAQPLDWSEAHAQRFAAAMNDDFNTAVAVAVLFELATEVNRTREPALARQLRLLAGLLGLLGREPREFLQHAAGAARTGALEPHEIEARIAARVAAKQAKNYAEADRIRAELLEAGIALEDKPGGSTEWRRV</sequence>
<accession>A2SAX8</accession>
<evidence type="ECO:0000255" key="1">
    <source>
        <dbReference type="HAMAP-Rule" id="MF_00041"/>
    </source>
</evidence>
<organism>
    <name type="scientific">Burkholderia mallei (strain NCTC 10229)</name>
    <dbReference type="NCBI Taxonomy" id="412022"/>
    <lineage>
        <taxon>Bacteria</taxon>
        <taxon>Pseudomonadati</taxon>
        <taxon>Pseudomonadota</taxon>
        <taxon>Betaproteobacteria</taxon>
        <taxon>Burkholderiales</taxon>
        <taxon>Burkholderiaceae</taxon>
        <taxon>Burkholderia</taxon>
        <taxon>pseudomallei group</taxon>
    </lineage>
</organism>
<reference key="1">
    <citation type="journal article" date="2010" name="Genome Biol. Evol.">
        <title>Continuing evolution of Burkholderia mallei through genome reduction and large-scale rearrangements.</title>
        <authorList>
            <person name="Losada L."/>
            <person name="Ronning C.M."/>
            <person name="DeShazer D."/>
            <person name="Woods D."/>
            <person name="Fedorova N."/>
            <person name="Kim H.S."/>
            <person name="Shabalina S.A."/>
            <person name="Pearson T.R."/>
            <person name="Brinkac L."/>
            <person name="Tan P."/>
            <person name="Nandi T."/>
            <person name="Crabtree J."/>
            <person name="Badger J."/>
            <person name="Beckstrom-Sternberg S."/>
            <person name="Saqib M."/>
            <person name="Schutzer S.E."/>
            <person name="Keim P."/>
            <person name="Nierman W.C."/>
        </authorList>
    </citation>
    <scope>NUCLEOTIDE SEQUENCE [LARGE SCALE GENOMIC DNA]</scope>
    <source>
        <strain>NCTC 10229</strain>
    </source>
</reference>
<name>SYC_BURM9</name>
<dbReference type="EC" id="6.1.1.16" evidence="1"/>
<dbReference type="EMBL" id="CP000546">
    <property type="protein sequence ID" value="ABN03151.1"/>
    <property type="molecule type" value="Genomic_DNA"/>
</dbReference>
<dbReference type="RefSeq" id="WP_004192752.1">
    <property type="nucleotide sequence ID" value="NC_008836.1"/>
</dbReference>
<dbReference type="SMR" id="A2SAX8"/>
<dbReference type="GeneID" id="93060794"/>
<dbReference type="KEGG" id="bml:BMA10229_A3156"/>
<dbReference type="HOGENOM" id="CLU_013528_0_2_4"/>
<dbReference type="Proteomes" id="UP000002283">
    <property type="component" value="Chromosome I"/>
</dbReference>
<dbReference type="GO" id="GO:0005829">
    <property type="term" value="C:cytosol"/>
    <property type="evidence" value="ECO:0007669"/>
    <property type="project" value="TreeGrafter"/>
</dbReference>
<dbReference type="GO" id="GO:0005524">
    <property type="term" value="F:ATP binding"/>
    <property type="evidence" value="ECO:0007669"/>
    <property type="project" value="UniProtKB-UniRule"/>
</dbReference>
<dbReference type="GO" id="GO:0004817">
    <property type="term" value="F:cysteine-tRNA ligase activity"/>
    <property type="evidence" value="ECO:0007669"/>
    <property type="project" value="UniProtKB-UniRule"/>
</dbReference>
<dbReference type="GO" id="GO:0008270">
    <property type="term" value="F:zinc ion binding"/>
    <property type="evidence" value="ECO:0007669"/>
    <property type="project" value="UniProtKB-UniRule"/>
</dbReference>
<dbReference type="GO" id="GO:0006423">
    <property type="term" value="P:cysteinyl-tRNA aminoacylation"/>
    <property type="evidence" value="ECO:0007669"/>
    <property type="project" value="UniProtKB-UniRule"/>
</dbReference>
<dbReference type="CDD" id="cd07963">
    <property type="entry name" value="Anticodon_Ia_Cys"/>
    <property type="match status" value="1"/>
</dbReference>
<dbReference type="CDD" id="cd00672">
    <property type="entry name" value="CysRS_core"/>
    <property type="match status" value="1"/>
</dbReference>
<dbReference type="FunFam" id="3.40.50.620:FF:000009">
    <property type="entry name" value="Cysteine--tRNA ligase"/>
    <property type="match status" value="1"/>
</dbReference>
<dbReference type="Gene3D" id="1.20.120.1910">
    <property type="entry name" value="Cysteine-tRNA ligase, C-terminal anti-codon recognition domain"/>
    <property type="match status" value="1"/>
</dbReference>
<dbReference type="Gene3D" id="3.40.50.620">
    <property type="entry name" value="HUPs"/>
    <property type="match status" value="1"/>
</dbReference>
<dbReference type="HAMAP" id="MF_00041">
    <property type="entry name" value="Cys_tRNA_synth"/>
    <property type="match status" value="1"/>
</dbReference>
<dbReference type="InterPro" id="IPR015803">
    <property type="entry name" value="Cys-tRNA-ligase"/>
</dbReference>
<dbReference type="InterPro" id="IPR015273">
    <property type="entry name" value="Cys-tRNA-synt_Ia_DALR"/>
</dbReference>
<dbReference type="InterPro" id="IPR024909">
    <property type="entry name" value="Cys-tRNA/MSH_ligase"/>
</dbReference>
<dbReference type="InterPro" id="IPR056411">
    <property type="entry name" value="CysS_C"/>
</dbReference>
<dbReference type="InterPro" id="IPR014729">
    <property type="entry name" value="Rossmann-like_a/b/a_fold"/>
</dbReference>
<dbReference type="InterPro" id="IPR032678">
    <property type="entry name" value="tRNA-synt_1_cat_dom"/>
</dbReference>
<dbReference type="InterPro" id="IPR009080">
    <property type="entry name" value="tRNAsynth_Ia_anticodon-bd"/>
</dbReference>
<dbReference type="NCBIfam" id="TIGR00435">
    <property type="entry name" value="cysS"/>
    <property type="match status" value="1"/>
</dbReference>
<dbReference type="PANTHER" id="PTHR10890:SF3">
    <property type="entry name" value="CYSTEINE--TRNA LIGASE, CYTOPLASMIC"/>
    <property type="match status" value="1"/>
</dbReference>
<dbReference type="PANTHER" id="PTHR10890">
    <property type="entry name" value="CYSTEINYL-TRNA SYNTHETASE"/>
    <property type="match status" value="1"/>
</dbReference>
<dbReference type="Pfam" id="PF23493">
    <property type="entry name" value="CysS_C"/>
    <property type="match status" value="1"/>
</dbReference>
<dbReference type="Pfam" id="PF09190">
    <property type="entry name" value="DALR_2"/>
    <property type="match status" value="1"/>
</dbReference>
<dbReference type="Pfam" id="PF01406">
    <property type="entry name" value="tRNA-synt_1e"/>
    <property type="match status" value="1"/>
</dbReference>
<dbReference type="PRINTS" id="PR00983">
    <property type="entry name" value="TRNASYNTHCYS"/>
</dbReference>
<dbReference type="SMART" id="SM00840">
    <property type="entry name" value="DALR_2"/>
    <property type="match status" value="1"/>
</dbReference>
<dbReference type="SUPFAM" id="SSF47323">
    <property type="entry name" value="Anticodon-binding domain of a subclass of class I aminoacyl-tRNA synthetases"/>
    <property type="match status" value="1"/>
</dbReference>
<dbReference type="SUPFAM" id="SSF52374">
    <property type="entry name" value="Nucleotidylyl transferase"/>
    <property type="match status" value="1"/>
</dbReference>
<feature type="chain" id="PRO_1000006569" description="Cysteine--tRNA ligase">
    <location>
        <begin position="1"/>
        <end position="465"/>
    </location>
</feature>
<feature type="short sequence motif" description="'HIGH' region">
    <location>
        <begin position="32"/>
        <end position="42"/>
    </location>
</feature>
<feature type="short sequence motif" description="'KMSKS' region">
    <location>
        <begin position="271"/>
        <end position="275"/>
    </location>
</feature>
<feature type="binding site" evidence="1">
    <location>
        <position position="30"/>
    </location>
    <ligand>
        <name>Zn(2+)</name>
        <dbReference type="ChEBI" id="CHEBI:29105"/>
    </ligand>
</feature>
<feature type="binding site" evidence="1">
    <location>
        <position position="214"/>
    </location>
    <ligand>
        <name>Zn(2+)</name>
        <dbReference type="ChEBI" id="CHEBI:29105"/>
    </ligand>
</feature>
<feature type="binding site" evidence="1">
    <location>
        <position position="239"/>
    </location>
    <ligand>
        <name>Zn(2+)</name>
        <dbReference type="ChEBI" id="CHEBI:29105"/>
    </ligand>
</feature>
<feature type="binding site" evidence="1">
    <location>
        <position position="243"/>
    </location>
    <ligand>
        <name>Zn(2+)</name>
        <dbReference type="ChEBI" id="CHEBI:29105"/>
    </ligand>
</feature>
<feature type="binding site" evidence="1">
    <location>
        <position position="274"/>
    </location>
    <ligand>
        <name>ATP</name>
        <dbReference type="ChEBI" id="CHEBI:30616"/>
    </ligand>
</feature>